<proteinExistence type="inferred from homology"/>
<evidence type="ECO:0000250" key="1"/>
<evidence type="ECO:0000250" key="2">
    <source>
        <dbReference type="UniProtKB" id="P63165"/>
    </source>
</evidence>
<evidence type="ECO:0000250" key="3">
    <source>
        <dbReference type="UniProtKB" id="P63166"/>
    </source>
</evidence>
<evidence type="ECO:0000255" key="4">
    <source>
        <dbReference type="PROSITE-ProRule" id="PRU00214"/>
    </source>
</evidence>
<evidence type="ECO:0000305" key="5"/>
<name>SUMO1_CERNI</name>
<sequence>MSDQEAKPSTEDLGDKKEGEYIKLKVIGQDSSEIHFKVKMTTHLKKLKESYCQRQGVPMNSLRFLFEGQRIADNHTPKELGMEEEDVIEVYHEQTGGHSTV</sequence>
<gene>
    <name type="primary">SUMO1</name>
</gene>
<comment type="function">
    <text evidence="2 3">Ubiquitin-like protein that can be covalently attached to proteins as a monomer or a lysine-linked polymer. Covalent attachment via an isopeptide bond to its substrates requires prior activation by the E1 complex SAE1-SAE2 and linkage to the E2 enzyme UBE2I, and can be promoted by E3 ligases such as PIAS1-4, RANBP2 or CBX4. This post-translational modification on lysine residues of proteins plays a crucial role in a number of cellular processes such as nuclear transport, DNA replication and repair, mitosis and signal transduction. Involved for instance in targeting RANGAP1 to the nuclear pore complex protein RANBP2. Covalently attached to the voltage-gated potassium channel KCNB1; this modulates the gating characteristics of KCNB1. Polymeric SUMO1 chains are also susceptible to polyubiquitination which functions as a signal for proteasomal degradation of modified proteins. May also regulate a network of genes involved in palate development. Covalently attached to ZFHX3.</text>
</comment>
<comment type="subunit">
    <text evidence="2 3">Covalently attached to KCNB1; UBE2I increases cross-linking with KCNB1 and PIAS1 decreases cross-links with KCNB1 (By similarity). Interacts with SAE2, RANBP2, PIAS1 and PIAS2 (By similarity). Interacts with PRKN (By similarity). Covalently attached to a number of proteins such as IKFZ1, PML, RANGAP1, HIPK2, SP100, p53, p73-alpha, MDM2, JUN, DNMT3B and TDG (By similarity). Also interacts with HIF1A, HIPK2, HIPK3, CHD3, EXOSC9, RAD51 and RAD52 (By similarity). Interacts with USP25 (via ts SIM domain); the interaction weakly sumoylates USP25 (By similarity). Interacts with SIMC1, CASP8AP2, RNF111 and SOBP (via SIM domains) (By similarity). Interacts with BHLHE40/DEC1 (By similarity). Interacts with RWDD3 (By similarity). Interacts with UBE2I/UBC9 and this interaction is enhanced in the presence of RWDD3 (By similarity). Interacts with MTA1 (By similarity). Interacts with SENP2 (By similarity). Interacts with HINT1 (By similarity).</text>
</comment>
<comment type="subcellular location">
    <subcellularLocation>
        <location evidence="2">Nucleus membrane</location>
    </subcellularLocation>
    <subcellularLocation>
        <location evidence="3">Nucleus speckle</location>
    </subcellularLocation>
    <subcellularLocation>
        <location evidence="2">Cytoplasm</location>
    </subcellularLocation>
    <subcellularLocation>
        <location evidence="2">Nucleus</location>
        <location evidence="2">PML body</location>
    </subcellularLocation>
    <subcellularLocation>
        <location evidence="2">Cell membrane</location>
    </subcellularLocation>
    <subcellularLocation>
        <location evidence="2">Nucleus</location>
    </subcellularLocation>
    <text evidence="2 3">Recruited by BCL11A into the nuclear body (By similarity). In the presence of ZFHX3, sequesterd to nuclear body (NB)-like dots in the nucleus some of which overlap or closely associate with PML body (By similarity).</text>
</comment>
<comment type="PTM">
    <text evidence="2">Cleavage of precursor form by SENP1, SENP2 is necessary for function.</text>
</comment>
<comment type="PTM">
    <text evidence="2">Polymeric SUMO1 chains undergo polyubiquitination by RNF4.</text>
</comment>
<comment type="similarity">
    <text evidence="5">Belongs to the ubiquitin family. SUMO subfamily.</text>
</comment>
<protein>
    <recommendedName>
        <fullName>Small ubiquitin-related modifier 1</fullName>
        <shortName>SUMO-1</shortName>
    </recommendedName>
    <alternativeName>
        <fullName>Sentrin</fullName>
    </alternativeName>
</protein>
<reference key="1">
    <citation type="journal article" date="2002" name="Yi Chuan">
        <title>Discovery of Cervus nippon Temminck-derived sentrin/SUMO.</title>
        <authorList>
            <person name="Sun L.G."/>
            <person name="Jiang Y."/>
            <person name="Yu Y.L."/>
        </authorList>
    </citation>
    <scope>NUCLEOTIDE SEQUENCE [MRNA]</scope>
    <source>
        <tissue>Uterus</tissue>
    </source>
</reference>
<dbReference type="EMBL" id="AF242526">
    <property type="protein sequence ID" value="AAF97049.1"/>
    <property type="molecule type" value="mRNA"/>
</dbReference>
<dbReference type="SMR" id="Q9MZD5"/>
<dbReference type="GO" id="GO:0005737">
    <property type="term" value="C:cytoplasm"/>
    <property type="evidence" value="ECO:0007669"/>
    <property type="project" value="UniProtKB-SubCell"/>
</dbReference>
<dbReference type="GO" id="GO:0031965">
    <property type="term" value="C:nuclear membrane"/>
    <property type="evidence" value="ECO:0007669"/>
    <property type="project" value="UniProtKB-SubCell"/>
</dbReference>
<dbReference type="GO" id="GO:0016607">
    <property type="term" value="C:nuclear speck"/>
    <property type="evidence" value="ECO:0007669"/>
    <property type="project" value="UniProtKB-SubCell"/>
</dbReference>
<dbReference type="GO" id="GO:0097165">
    <property type="term" value="C:nuclear stress granule"/>
    <property type="evidence" value="ECO:0000250"/>
    <property type="project" value="UniProtKB"/>
</dbReference>
<dbReference type="GO" id="GO:0005886">
    <property type="term" value="C:plasma membrane"/>
    <property type="evidence" value="ECO:0000250"/>
    <property type="project" value="UniProtKB"/>
</dbReference>
<dbReference type="GO" id="GO:0016605">
    <property type="term" value="C:PML body"/>
    <property type="evidence" value="ECO:0000250"/>
    <property type="project" value="UniProtKB"/>
</dbReference>
<dbReference type="GO" id="GO:0015459">
    <property type="term" value="F:potassium channel regulator activity"/>
    <property type="evidence" value="ECO:0000250"/>
    <property type="project" value="UniProtKB"/>
</dbReference>
<dbReference type="GO" id="GO:0008134">
    <property type="term" value="F:transcription factor binding"/>
    <property type="evidence" value="ECO:0000250"/>
    <property type="project" value="AgBase"/>
</dbReference>
<dbReference type="GO" id="GO:0031625">
    <property type="term" value="F:ubiquitin protein ligase binding"/>
    <property type="evidence" value="ECO:0000250"/>
    <property type="project" value="UniProtKB"/>
</dbReference>
<dbReference type="GO" id="GO:0071276">
    <property type="term" value="P:cellular response to cadmium ion"/>
    <property type="evidence" value="ECO:0000250"/>
    <property type="project" value="UniProtKB"/>
</dbReference>
<dbReference type="GO" id="GO:0034605">
    <property type="term" value="P:cellular response to heat"/>
    <property type="evidence" value="ECO:0000250"/>
    <property type="project" value="UniProtKB"/>
</dbReference>
<dbReference type="GO" id="GO:0045759">
    <property type="term" value="P:negative regulation of action potential"/>
    <property type="evidence" value="ECO:0000250"/>
    <property type="project" value="UniProtKB"/>
</dbReference>
<dbReference type="GO" id="GO:1902260">
    <property type="term" value="P:negative regulation of delayed rectifier potassium channel activity"/>
    <property type="evidence" value="ECO:0000250"/>
    <property type="project" value="UniProtKB"/>
</dbReference>
<dbReference type="GO" id="GO:0016925">
    <property type="term" value="P:protein sumoylation"/>
    <property type="evidence" value="ECO:0000250"/>
    <property type="project" value="UniProtKB"/>
</dbReference>
<dbReference type="GO" id="GO:0060021">
    <property type="term" value="P:roof of mouth development"/>
    <property type="evidence" value="ECO:0000250"/>
    <property type="project" value="UniProtKB"/>
</dbReference>
<dbReference type="CDD" id="cd16114">
    <property type="entry name" value="Ubl_SUMO1"/>
    <property type="match status" value="1"/>
</dbReference>
<dbReference type="FunFam" id="3.10.20.90:FF:000092">
    <property type="entry name" value="Small ubiquitin-related modifier"/>
    <property type="match status" value="1"/>
</dbReference>
<dbReference type="Gene3D" id="3.10.20.90">
    <property type="entry name" value="Phosphatidylinositol 3-kinase Catalytic Subunit, Chain A, domain 1"/>
    <property type="match status" value="1"/>
</dbReference>
<dbReference type="InterPro" id="IPR022617">
    <property type="entry name" value="Rad60/SUMO-like_dom"/>
</dbReference>
<dbReference type="InterPro" id="IPR046332">
    <property type="entry name" value="SUMO1_Ubl"/>
</dbReference>
<dbReference type="InterPro" id="IPR000626">
    <property type="entry name" value="Ubiquitin-like_dom"/>
</dbReference>
<dbReference type="InterPro" id="IPR029071">
    <property type="entry name" value="Ubiquitin-like_domsf"/>
</dbReference>
<dbReference type="PANTHER" id="PTHR10562">
    <property type="entry name" value="SMALL UBIQUITIN-RELATED MODIFIER"/>
    <property type="match status" value="1"/>
</dbReference>
<dbReference type="Pfam" id="PF11976">
    <property type="entry name" value="Rad60-SLD"/>
    <property type="match status" value="1"/>
</dbReference>
<dbReference type="SMART" id="SM00213">
    <property type="entry name" value="UBQ"/>
    <property type="match status" value="1"/>
</dbReference>
<dbReference type="SUPFAM" id="SSF54236">
    <property type="entry name" value="Ubiquitin-like"/>
    <property type="match status" value="1"/>
</dbReference>
<dbReference type="PROSITE" id="PS50053">
    <property type="entry name" value="UBIQUITIN_2"/>
    <property type="match status" value="1"/>
</dbReference>
<keyword id="KW-0007">Acetylation</keyword>
<keyword id="KW-1003">Cell membrane</keyword>
<keyword id="KW-0963">Cytoplasm</keyword>
<keyword id="KW-1017">Isopeptide bond</keyword>
<keyword id="KW-0472">Membrane</keyword>
<keyword id="KW-0539">Nucleus</keyword>
<keyword id="KW-0597">Phosphoprotein</keyword>
<keyword id="KW-0832">Ubl conjugation</keyword>
<keyword id="KW-0833">Ubl conjugation pathway</keyword>
<feature type="initiator methionine" description="Removed" evidence="2">
    <location>
        <position position="1"/>
    </location>
</feature>
<feature type="chain" id="PRO_0000035937" description="Small ubiquitin-related modifier 1">
    <location>
        <begin position="2"/>
        <end position="97"/>
    </location>
</feature>
<feature type="propeptide" id="PRO_0000035938" evidence="1">
    <location>
        <begin position="98"/>
        <end position="101"/>
    </location>
</feature>
<feature type="domain" description="Ubiquitin-like" evidence="4">
    <location>
        <begin position="20"/>
        <end position="97"/>
    </location>
</feature>
<feature type="site" description="Interaction with PIAS2" evidence="1">
    <location>
        <position position="36"/>
    </location>
</feature>
<feature type="modified residue" description="N-acetylserine" evidence="2">
    <location>
        <position position="2"/>
    </location>
</feature>
<feature type="modified residue" description="Phosphoserine" evidence="2">
    <location>
        <position position="2"/>
    </location>
</feature>
<feature type="modified residue" description="Phosphoserine" evidence="2">
    <location>
        <position position="9"/>
    </location>
</feature>
<feature type="modified residue" description="Phosphoserine" evidence="2">
    <location>
        <position position="32"/>
    </location>
</feature>
<feature type="cross-link" description="Glycyl lysine isopeptide (Lys-Gly) (interchain with G-Cter in SUMO1); alternate" evidence="2">
    <location>
        <position position="7"/>
    </location>
</feature>
<feature type="cross-link" description="Glycyl lysine isopeptide (Lys-Gly) (interchain with G-Cter in SUMO2); alternate" evidence="2">
    <location>
        <position position="7"/>
    </location>
</feature>
<feature type="cross-link" description="Glycyl lysine isopeptide (Lys-Gly) (interchain with G-Cter in SUMO2)" evidence="2">
    <location>
        <position position="16"/>
    </location>
</feature>
<feature type="cross-link" description="Glycyl lysine isopeptide (Lys-Gly) (interchain with G-Cter in SUMO2)" evidence="2">
    <location>
        <position position="17"/>
    </location>
</feature>
<feature type="cross-link" description="Glycyl lysine isopeptide (Lys-Gly) (interchain with G-Cter in SUMO2)" evidence="2">
    <location>
        <position position="23"/>
    </location>
</feature>
<feature type="cross-link" description="Glycyl lysine isopeptide (Lys-Gly) (interchain with G-Cter in SUMO1)" evidence="2">
    <location>
        <position position="25"/>
    </location>
</feature>
<feature type="cross-link" description="Glycyl lysine isopeptide (Lys-Gly) (interchain with G-Cter in SUMO2)" evidence="2">
    <location>
        <position position="37"/>
    </location>
</feature>
<feature type="cross-link" description="Glycyl lysine isopeptide (Lys-Gly) (interchain with G-Cter in SUMO2)" evidence="2">
    <location>
        <position position="39"/>
    </location>
</feature>
<feature type="cross-link" description="Glycyl lysine isopeptide (Lys-Gly) (interchain with G-Cter in SUMO2)" evidence="2">
    <location>
        <position position="45"/>
    </location>
</feature>
<feature type="cross-link" description="Glycyl lysine isopeptide (Lys-Gly) (interchain with G-Cter in SUMO2)" evidence="2">
    <location>
        <position position="46"/>
    </location>
</feature>
<feature type="cross-link" description="Glycyl lysine isopeptide (Gly-Lys) (interchain with K-? in acceptor proteins)" evidence="4">
    <location>
        <position position="97"/>
    </location>
</feature>
<accession>Q9MZD5</accession>
<organism>
    <name type="scientific">Cervus nippon</name>
    <name type="common">Sika deer</name>
    <dbReference type="NCBI Taxonomy" id="9863"/>
    <lineage>
        <taxon>Eukaryota</taxon>
        <taxon>Metazoa</taxon>
        <taxon>Chordata</taxon>
        <taxon>Craniata</taxon>
        <taxon>Vertebrata</taxon>
        <taxon>Euteleostomi</taxon>
        <taxon>Mammalia</taxon>
        <taxon>Eutheria</taxon>
        <taxon>Laurasiatheria</taxon>
        <taxon>Artiodactyla</taxon>
        <taxon>Ruminantia</taxon>
        <taxon>Pecora</taxon>
        <taxon>Cervidae</taxon>
        <taxon>Cervinae</taxon>
        <taxon>Cervus</taxon>
    </lineage>
</organism>